<comment type="function">
    <text evidence="1">Snake venom phospholipase A2 (PLA2) that inhibits collagen-induced platelet aggregation. PLA2 catalyzes the calcium-dependent hydrolysis of the 2-acyl groups in 3-sn-phosphoglycerides (By similarity).</text>
</comment>
<comment type="catalytic activity">
    <reaction evidence="3 4">
        <text>a 1,2-diacyl-sn-glycero-3-phosphocholine + H2O = a 1-acyl-sn-glycero-3-phosphocholine + a fatty acid + H(+)</text>
        <dbReference type="Rhea" id="RHEA:15801"/>
        <dbReference type="ChEBI" id="CHEBI:15377"/>
        <dbReference type="ChEBI" id="CHEBI:15378"/>
        <dbReference type="ChEBI" id="CHEBI:28868"/>
        <dbReference type="ChEBI" id="CHEBI:57643"/>
        <dbReference type="ChEBI" id="CHEBI:58168"/>
        <dbReference type="EC" id="3.1.1.4"/>
    </reaction>
</comment>
<comment type="cofactor">
    <cofactor evidence="1">
        <name>Ca(2+)</name>
        <dbReference type="ChEBI" id="CHEBI:29108"/>
    </cofactor>
    <text evidence="1">Binds 1 Ca(2+) ion.</text>
</comment>
<comment type="subcellular location">
    <subcellularLocation>
        <location evidence="1">Secreted</location>
    </subcellularLocation>
</comment>
<comment type="tissue specificity">
    <text>Expressed by the venom gland.</text>
</comment>
<comment type="similarity">
    <text evidence="5">Belongs to the phospholipase A2 family. Group I subfamily. D49 sub-subfamily.</text>
</comment>
<sequence>MYPAHLLVLLAVCVSLLGAASIPPQPLNLVQFSYLIQCANHGSRATWHYTDYGCYCGSGGSGTPVDELDRCCQTHDNCYAEAEKKGCYPKMSAYDYYCGENGPYCRNIKKECQRFVCDCDVEAAKCFARAPYNDANWNIDTKKRCQ</sequence>
<organism>
    <name type="scientific">Austrelaps superbus</name>
    <name type="common">Lowland copperhead snake</name>
    <name type="synonym">Hoplocephalus superbus</name>
    <dbReference type="NCBI Taxonomy" id="29156"/>
    <lineage>
        <taxon>Eukaryota</taxon>
        <taxon>Metazoa</taxon>
        <taxon>Chordata</taxon>
        <taxon>Craniata</taxon>
        <taxon>Vertebrata</taxon>
        <taxon>Euteleostomi</taxon>
        <taxon>Lepidosauria</taxon>
        <taxon>Squamata</taxon>
        <taxon>Bifurcata</taxon>
        <taxon>Unidentata</taxon>
        <taxon>Episquamata</taxon>
        <taxon>Toxicofera</taxon>
        <taxon>Serpentes</taxon>
        <taxon>Colubroidea</taxon>
        <taxon>Elapidae</taxon>
        <taxon>Hydrophiinae</taxon>
        <taxon>Austrelaps</taxon>
    </lineage>
</organism>
<name>PA2AB_AUSSU</name>
<reference key="1">
    <citation type="journal article" date="2000" name="Arch. Biochem. Biophys.">
        <title>Phospholipase A(2) with platelet aggregation inhibitor activity from Austrelaps superbus venom: protein purification and cDNA cloning.</title>
        <authorList>
            <person name="Singh S.B."/>
            <person name="Armugam A."/>
            <person name="Kini R.M."/>
            <person name="Jeyaseelan K."/>
        </authorList>
    </citation>
    <scope>NUCLEOTIDE SEQUENCE [MRNA]</scope>
    <source>
        <tissue>Venom gland</tissue>
    </source>
</reference>
<feature type="signal peptide" evidence="2">
    <location>
        <begin position="1"/>
        <end position="19"/>
    </location>
</feature>
<feature type="propeptide" id="PRO_0000022805" evidence="2">
    <location>
        <begin position="20"/>
        <end position="27"/>
    </location>
</feature>
<feature type="chain" id="PRO_0000022806" description="Acidic phospholipase A2 S13-69J">
    <location>
        <begin position="28"/>
        <end position="146"/>
    </location>
</feature>
<feature type="active site" evidence="1">
    <location>
        <position position="75"/>
    </location>
</feature>
<feature type="active site" evidence="1">
    <location>
        <position position="120"/>
    </location>
</feature>
<feature type="binding site" evidence="1">
    <location>
        <position position="55"/>
    </location>
    <ligand>
        <name>Ca(2+)</name>
        <dbReference type="ChEBI" id="CHEBI:29108"/>
    </ligand>
</feature>
<feature type="binding site" evidence="1">
    <location>
        <position position="57"/>
    </location>
    <ligand>
        <name>Ca(2+)</name>
        <dbReference type="ChEBI" id="CHEBI:29108"/>
    </ligand>
</feature>
<feature type="binding site" evidence="1">
    <location>
        <position position="59"/>
    </location>
    <ligand>
        <name>Ca(2+)</name>
        <dbReference type="ChEBI" id="CHEBI:29108"/>
    </ligand>
</feature>
<feature type="binding site" evidence="1">
    <location>
        <position position="76"/>
    </location>
    <ligand>
        <name>Ca(2+)</name>
        <dbReference type="ChEBI" id="CHEBI:29108"/>
    </ligand>
</feature>
<feature type="disulfide bond" evidence="1">
    <location>
        <begin position="38"/>
        <end position="98"/>
    </location>
</feature>
<feature type="disulfide bond" evidence="1">
    <location>
        <begin position="54"/>
        <end position="145"/>
    </location>
</feature>
<feature type="disulfide bond" evidence="1">
    <location>
        <begin position="56"/>
        <end position="72"/>
    </location>
</feature>
<feature type="disulfide bond" evidence="1">
    <location>
        <begin position="71"/>
        <end position="126"/>
    </location>
</feature>
<feature type="disulfide bond" evidence="1">
    <location>
        <begin position="78"/>
        <end position="119"/>
    </location>
</feature>
<feature type="disulfide bond" evidence="1">
    <location>
        <begin position="87"/>
        <end position="112"/>
    </location>
</feature>
<feature type="disulfide bond" evidence="1">
    <location>
        <begin position="105"/>
        <end position="117"/>
    </location>
</feature>
<keyword id="KW-0106">Calcium</keyword>
<keyword id="KW-1015">Disulfide bond</keyword>
<keyword id="KW-1199">Hemostasis impairing toxin</keyword>
<keyword id="KW-0378">Hydrolase</keyword>
<keyword id="KW-0442">Lipid degradation</keyword>
<keyword id="KW-0443">Lipid metabolism</keyword>
<keyword id="KW-0479">Metal-binding</keyword>
<keyword id="KW-1201">Platelet aggregation inhibiting toxin</keyword>
<keyword id="KW-0964">Secreted</keyword>
<keyword id="KW-0732">Signal</keyword>
<keyword id="KW-0800">Toxin</keyword>
<dbReference type="EC" id="3.1.1.4"/>
<dbReference type="EMBL" id="AF184137">
    <property type="protein sequence ID" value="AAD56560.1"/>
    <property type="molecule type" value="mRNA"/>
</dbReference>
<dbReference type="SMR" id="Q9PUH3"/>
<dbReference type="GO" id="GO:0005576">
    <property type="term" value="C:extracellular region"/>
    <property type="evidence" value="ECO:0007669"/>
    <property type="project" value="UniProtKB-SubCell"/>
</dbReference>
<dbReference type="GO" id="GO:0005509">
    <property type="term" value="F:calcium ion binding"/>
    <property type="evidence" value="ECO:0007669"/>
    <property type="project" value="InterPro"/>
</dbReference>
<dbReference type="GO" id="GO:0047498">
    <property type="term" value="F:calcium-dependent phospholipase A2 activity"/>
    <property type="evidence" value="ECO:0007669"/>
    <property type="project" value="TreeGrafter"/>
</dbReference>
<dbReference type="GO" id="GO:0005543">
    <property type="term" value="F:phospholipid binding"/>
    <property type="evidence" value="ECO:0007669"/>
    <property type="project" value="TreeGrafter"/>
</dbReference>
<dbReference type="GO" id="GO:0090729">
    <property type="term" value="F:toxin activity"/>
    <property type="evidence" value="ECO:0007669"/>
    <property type="project" value="UniProtKB-KW"/>
</dbReference>
<dbReference type="GO" id="GO:0050482">
    <property type="term" value="P:arachidonate secretion"/>
    <property type="evidence" value="ECO:0007669"/>
    <property type="project" value="InterPro"/>
</dbReference>
<dbReference type="GO" id="GO:0016042">
    <property type="term" value="P:lipid catabolic process"/>
    <property type="evidence" value="ECO:0007669"/>
    <property type="project" value="UniProtKB-KW"/>
</dbReference>
<dbReference type="GO" id="GO:0006644">
    <property type="term" value="P:phospholipid metabolic process"/>
    <property type="evidence" value="ECO:0007669"/>
    <property type="project" value="InterPro"/>
</dbReference>
<dbReference type="CDD" id="cd00125">
    <property type="entry name" value="PLA2c"/>
    <property type="match status" value="1"/>
</dbReference>
<dbReference type="FunFam" id="1.20.90.10:FF:000007">
    <property type="entry name" value="Acidic phospholipase A2"/>
    <property type="match status" value="1"/>
</dbReference>
<dbReference type="Gene3D" id="1.20.90.10">
    <property type="entry name" value="Phospholipase A2 domain"/>
    <property type="match status" value="1"/>
</dbReference>
<dbReference type="InterPro" id="IPR001211">
    <property type="entry name" value="PLipase_A2"/>
</dbReference>
<dbReference type="InterPro" id="IPR033112">
    <property type="entry name" value="PLipase_A2_Asp_AS"/>
</dbReference>
<dbReference type="InterPro" id="IPR016090">
    <property type="entry name" value="PLipase_A2_dom"/>
</dbReference>
<dbReference type="InterPro" id="IPR036444">
    <property type="entry name" value="PLipase_A2_dom_sf"/>
</dbReference>
<dbReference type="InterPro" id="IPR033113">
    <property type="entry name" value="PLipase_A2_His_AS"/>
</dbReference>
<dbReference type="PANTHER" id="PTHR11716:SF94">
    <property type="entry name" value="PHOSPHOLIPASE A2"/>
    <property type="match status" value="1"/>
</dbReference>
<dbReference type="PANTHER" id="PTHR11716">
    <property type="entry name" value="PHOSPHOLIPASE A2 FAMILY MEMBER"/>
    <property type="match status" value="1"/>
</dbReference>
<dbReference type="Pfam" id="PF00068">
    <property type="entry name" value="Phospholip_A2_1"/>
    <property type="match status" value="1"/>
</dbReference>
<dbReference type="PRINTS" id="PR00389">
    <property type="entry name" value="PHPHLIPASEA2"/>
</dbReference>
<dbReference type="SMART" id="SM00085">
    <property type="entry name" value="PA2c"/>
    <property type="match status" value="1"/>
</dbReference>
<dbReference type="SUPFAM" id="SSF48619">
    <property type="entry name" value="Phospholipase A2, PLA2"/>
    <property type="match status" value="1"/>
</dbReference>
<dbReference type="PROSITE" id="PS00119">
    <property type="entry name" value="PA2_ASP"/>
    <property type="match status" value="1"/>
</dbReference>
<dbReference type="PROSITE" id="PS00118">
    <property type="entry name" value="PA2_HIS"/>
    <property type="match status" value="1"/>
</dbReference>
<accession>Q9PUH3</accession>
<evidence type="ECO:0000250" key="1"/>
<evidence type="ECO:0000255" key="2"/>
<evidence type="ECO:0000255" key="3">
    <source>
        <dbReference type="PROSITE-ProRule" id="PRU10035"/>
    </source>
</evidence>
<evidence type="ECO:0000255" key="4">
    <source>
        <dbReference type="PROSITE-ProRule" id="PRU10036"/>
    </source>
</evidence>
<evidence type="ECO:0000305" key="5"/>
<proteinExistence type="evidence at transcript level"/>
<protein>
    <recommendedName>
        <fullName>Acidic phospholipase A2 S13-69J</fullName>
        <shortName>svPLA2</shortName>
        <ecNumber>3.1.1.4</ecNumber>
    </recommendedName>
    <alternativeName>
        <fullName>ASPLA11</fullName>
    </alternativeName>
    <alternativeName>
        <fullName>Phosphatidylcholine 2-acylhydrolase</fullName>
    </alternativeName>
</protein>